<feature type="chain" id="PRO_0000286611" description="Shieldin complex subunit 1">
    <location>
        <begin position="1"/>
        <end position="206"/>
    </location>
</feature>
<feature type="region of interest" description="Disordered" evidence="2">
    <location>
        <begin position="1"/>
        <end position="21"/>
    </location>
</feature>
<feature type="region of interest" description="Disordered" evidence="2">
    <location>
        <begin position="33"/>
        <end position="69"/>
    </location>
</feature>
<feature type="compositionally biased region" description="Polar residues" evidence="2">
    <location>
        <begin position="1"/>
        <end position="15"/>
    </location>
</feature>
<feature type="compositionally biased region" description="Polar residues" evidence="2">
    <location>
        <begin position="33"/>
        <end position="43"/>
    </location>
</feature>
<feature type="compositionally biased region" description="Polar residues" evidence="2">
    <location>
        <begin position="60"/>
        <end position="69"/>
    </location>
</feature>
<reference key="1">
    <citation type="submission" date="2006-01" db="EMBL/GenBank/DDBJ databases">
        <authorList>
            <consortium name="NIH - Mammalian Gene Collection (MGC) project"/>
        </authorList>
    </citation>
    <scope>NUCLEOTIDE SEQUENCE [LARGE SCALE MRNA]</scope>
    <source>
        <strain>Hereford</strain>
        <tissue>Hypothalamus</tissue>
    </source>
</reference>
<organism>
    <name type="scientific">Bos taurus</name>
    <name type="common">Bovine</name>
    <dbReference type="NCBI Taxonomy" id="9913"/>
    <lineage>
        <taxon>Eukaryota</taxon>
        <taxon>Metazoa</taxon>
        <taxon>Chordata</taxon>
        <taxon>Craniata</taxon>
        <taxon>Vertebrata</taxon>
        <taxon>Euteleostomi</taxon>
        <taxon>Mammalia</taxon>
        <taxon>Eutheria</taxon>
        <taxon>Laurasiatheria</taxon>
        <taxon>Artiodactyla</taxon>
        <taxon>Ruminantia</taxon>
        <taxon>Pecora</taxon>
        <taxon>Bovidae</taxon>
        <taxon>Bovinae</taxon>
        <taxon>Bos</taxon>
    </lineage>
</organism>
<comment type="function">
    <text evidence="1">Component of the shieldin complex, which plays an important role in repair of DNA double-stranded breaks (DSBs). During G1 and S phase of the cell cycle, the complex functions downstream of TP53BP1 to promote non-homologous end joining (NHEJ) and suppress DNA end resection. Mediates various NHEJ-dependent processes including immunoglobulin class-switch recombination, and fusion of unprotected telomeres.</text>
</comment>
<comment type="subunit">
    <text evidence="1">Component of the shieldin complex, consisting of SHLD1, SHLD2, SHLD3 and MAD2L2/REV7. Within the complex, SHLD2 forms a scaffold which interacts with a SHLD3-MAD2L2 subcomplex via its N-terminus, and with SHLD1 via its C-terminus. Interacts with ASTE1.</text>
</comment>
<comment type="subcellular location">
    <subcellularLocation>
        <location evidence="1">Chromosome</location>
    </subcellularLocation>
</comment>
<evidence type="ECO:0000250" key="1">
    <source>
        <dbReference type="UniProtKB" id="Q8IYI0"/>
    </source>
</evidence>
<evidence type="ECO:0000256" key="2">
    <source>
        <dbReference type="SAM" id="MobiDB-lite"/>
    </source>
</evidence>
<proteinExistence type="evidence at transcript level"/>
<accession>Q2KIJ1</accession>
<gene>
    <name evidence="1" type="primary">SHLD1</name>
    <name evidence="1" type="synonym">RINN3</name>
</gene>
<keyword id="KW-0158">Chromosome</keyword>
<keyword id="KW-0227">DNA damage</keyword>
<keyword id="KW-0234">DNA repair</keyword>
<keyword id="KW-1185">Reference proteome</keyword>
<protein>
    <recommendedName>
        <fullName evidence="1">Shieldin complex subunit 1</fullName>
    </recommendedName>
    <alternativeName>
        <fullName evidence="1">RINN1-REV7-interacting novel NHEJ regulator 3</fullName>
    </alternativeName>
</protein>
<dbReference type="EMBL" id="BC112619">
    <property type="protein sequence ID" value="AAI12620.1"/>
    <property type="molecule type" value="mRNA"/>
</dbReference>
<dbReference type="RefSeq" id="NP_001040017.1">
    <property type="nucleotide sequence ID" value="NM_001046552.2"/>
</dbReference>
<dbReference type="RefSeq" id="XP_005214904.1">
    <property type="nucleotide sequence ID" value="XM_005214847.5"/>
</dbReference>
<dbReference type="RefSeq" id="XP_015329665.1">
    <property type="nucleotide sequence ID" value="XM_015474179.1"/>
</dbReference>
<dbReference type="SMR" id="Q2KIJ1"/>
<dbReference type="FunCoup" id="Q2KIJ1">
    <property type="interactions" value="29"/>
</dbReference>
<dbReference type="STRING" id="9913.ENSBTAP00000064111"/>
<dbReference type="PaxDb" id="9913-ENSBTAP00000039142"/>
<dbReference type="Ensembl" id="ENSBTAT00000039347.4">
    <property type="protein sequence ID" value="ENSBTAP00000039142.3"/>
    <property type="gene ID" value="ENSBTAG00000014048.6"/>
</dbReference>
<dbReference type="GeneID" id="615129"/>
<dbReference type="KEGG" id="bta:615129"/>
<dbReference type="CTD" id="149840"/>
<dbReference type="VEuPathDB" id="HostDB:ENSBTAG00000014048"/>
<dbReference type="VGNC" id="VGNC:49170">
    <property type="gene designation" value="SHLD1"/>
</dbReference>
<dbReference type="eggNOG" id="ENOG502SUXK">
    <property type="taxonomic scope" value="Eukaryota"/>
</dbReference>
<dbReference type="GeneTree" id="ENSGT00390000014969"/>
<dbReference type="HOGENOM" id="CLU_090358_0_0_1"/>
<dbReference type="InParanoid" id="Q2KIJ1"/>
<dbReference type="OMA" id="NHPTTAC"/>
<dbReference type="OrthoDB" id="9446682at2759"/>
<dbReference type="TreeFam" id="TF336046"/>
<dbReference type="Proteomes" id="UP000009136">
    <property type="component" value="Chromosome 13"/>
</dbReference>
<dbReference type="Bgee" id="ENSBTAG00000014048">
    <property type="expression patterns" value="Expressed in semen and 108 other cell types or tissues"/>
</dbReference>
<dbReference type="GO" id="GO:0035861">
    <property type="term" value="C:site of double-strand break"/>
    <property type="evidence" value="ECO:0000318"/>
    <property type="project" value="GO_Central"/>
</dbReference>
<dbReference type="GO" id="GO:0006281">
    <property type="term" value="P:DNA repair"/>
    <property type="evidence" value="ECO:0007669"/>
    <property type="project" value="UniProtKB-KW"/>
</dbReference>
<dbReference type="GO" id="GO:2000042">
    <property type="term" value="P:negative regulation of double-strand break repair via homologous recombination"/>
    <property type="evidence" value="ECO:0000318"/>
    <property type="project" value="GO_Central"/>
</dbReference>
<dbReference type="GO" id="GO:2001034">
    <property type="term" value="P:positive regulation of double-strand break repair via nonhomologous end joining"/>
    <property type="evidence" value="ECO:0000318"/>
    <property type="project" value="GO_Central"/>
</dbReference>
<dbReference type="GO" id="GO:0045830">
    <property type="term" value="P:positive regulation of isotype switching"/>
    <property type="evidence" value="ECO:0000318"/>
    <property type="project" value="GO_Central"/>
</dbReference>
<dbReference type="InterPro" id="IPR027821">
    <property type="entry name" value="SHLD1"/>
</dbReference>
<dbReference type="InterPro" id="IPR053898">
    <property type="entry name" value="SHLD1_C"/>
</dbReference>
<dbReference type="PANTHER" id="PTHR36863">
    <property type="entry name" value="SHIELDIN COMPLEX SUBUNIT 1"/>
    <property type="match status" value="1"/>
</dbReference>
<dbReference type="PANTHER" id="PTHR36863:SF1">
    <property type="entry name" value="SHIELDIN COMPLEX SUBUNIT 1"/>
    <property type="match status" value="1"/>
</dbReference>
<dbReference type="Pfam" id="PF15021">
    <property type="entry name" value="SHLD1_C"/>
    <property type="match status" value="1"/>
</dbReference>
<name>SHLD1_BOVIN</name>
<sequence length="206" mass="23268">MATQETTPGSQTEESNALDLPSAYDIRDYVLQRPSQQTNSEAFSSEEACSIPCSSDVDPDSSNLNTEQNDSWTSENFWFYPSVKGQPETKEEDDGLRKSLDKFYEVFGNPQPASGNSLSTSVCQCLSQKINELKDQENQTYTLRSFQMARVIFNQNGCSILQKHSRDAHFYPVREGSTSLQDEKLTPGLSKDIIHFLLQQNLMKDQ</sequence>